<proteinExistence type="inferred from homology"/>
<sequence length="790" mass="86688">MPPIIHERSIEIAGRLLTIETGRVAEQADGAVLVRYGETVVLTTVVGAKQPVEGIDFFPLTVEYEEKMYAAGKIPGGFFRREGKPSEAAILAARLTDRPIRPLFPKGYRNEVQVISTVLSADQENEPDVLSIIGASAALTLSDIPWYGPVGAVRIGELDGELVINPTSHQLLESRMDIVVAGTADAILMVEGQANEISEDRFIEAVVRAHQEIKRIVAVQLELQAVAGKPKREFVPPQENVELKQQIADYLGDRLREAVFNPDKTLRVQATAALREEVIAHFVPNEPLAIGTPQSGLPTAKEVGDLFDSLVKELVRRTILEQGERPDGRKPDEIREIWIQVGLLPRPHGSALFTRGQTQVLTVCTLGTKEEEQFLDSLGIEETKRYMHHYNFPPFSTGEIRRLRGPSRRDIGHGALAERALLAVLPSEDEFPYTMRLVSEVLSSNGSTSMASVCGSSLALMDAGVPIRKPVAGVAMGLVTDQTTGRYTILTDIQGIEDALGDMDFKVAGTRDGITAIQMDIKVMGITPEIMRDALEQARRGRLFILDKMSEVIDAPRPEMSPYAPRILRIKIKPEQIGEVIGPGGRVIRAIQEQTGTKISIEEDGTVFISAANEDAARRAVREIERLTRVPEVGEIFYGRVVTIIPSGAFVEILPGKDGFLHISEIAPERVRSVEDVLKVGQEINVMVIGVRPDGKINLSRKALLEKEAAERAATAQAPADGRSHQPRAPQRPSGTAQPERRPGPPTPRRPEQRGPSRPPRPQAQRSTPPPGQYRIGDRLKELLGEDEPN</sequence>
<comment type="function">
    <text evidence="1">Involved in mRNA degradation. Catalyzes the phosphorolysis of single-stranded polyribonucleotides processively in the 3'- to 5'-direction.</text>
</comment>
<comment type="catalytic activity">
    <reaction evidence="1">
        <text>RNA(n+1) + phosphate = RNA(n) + a ribonucleoside 5'-diphosphate</text>
        <dbReference type="Rhea" id="RHEA:22096"/>
        <dbReference type="Rhea" id="RHEA-COMP:14527"/>
        <dbReference type="Rhea" id="RHEA-COMP:17342"/>
        <dbReference type="ChEBI" id="CHEBI:43474"/>
        <dbReference type="ChEBI" id="CHEBI:57930"/>
        <dbReference type="ChEBI" id="CHEBI:140395"/>
        <dbReference type="EC" id="2.7.7.8"/>
    </reaction>
</comment>
<comment type="cofactor">
    <cofactor evidence="1">
        <name>Mg(2+)</name>
        <dbReference type="ChEBI" id="CHEBI:18420"/>
    </cofactor>
</comment>
<comment type="subcellular location">
    <subcellularLocation>
        <location evidence="1">Cytoplasm</location>
    </subcellularLocation>
</comment>
<comment type="similarity">
    <text evidence="1">Belongs to the polyribonucleotide nucleotidyltransferase family.</text>
</comment>
<reference key="1">
    <citation type="journal article" date="2009" name="PLoS ONE">
        <title>Complete genome sequence of the aerobic CO-oxidizing thermophile Thermomicrobium roseum.</title>
        <authorList>
            <person name="Wu D."/>
            <person name="Raymond J."/>
            <person name="Wu M."/>
            <person name="Chatterji S."/>
            <person name="Ren Q."/>
            <person name="Graham J.E."/>
            <person name="Bryant D.A."/>
            <person name="Robb F."/>
            <person name="Colman A."/>
            <person name="Tallon L.J."/>
            <person name="Badger J.H."/>
            <person name="Madupu R."/>
            <person name="Ward N.L."/>
            <person name="Eisen J.A."/>
        </authorList>
    </citation>
    <scope>NUCLEOTIDE SEQUENCE [LARGE SCALE GENOMIC DNA]</scope>
    <source>
        <strain>ATCC 27502 / DSM 5159 / P-2</strain>
    </source>
</reference>
<feature type="chain" id="PRO_0000381924" description="Polyribonucleotide nucleotidyltransferase">
    <location>
        <begin position="1"/>
        <end position="790"/>
    </location>
</feature>
<feature type="domain" description="KH" evidence="1">
    <location>
        <begin position="565"/>
        <end position="624"/>
    </location>
</feature>
<feature type="domain" description="S1 motif" evidence="1">
    <location>
        <begin position="634"/>
        <end position="702"/>
    </location>
</feature>
<feature type="region of interest" description="Disordered" evidence="2">
    <location>
        <begin position="710"/>
        <end position="790"/>
    </location>
</feature>
<feature type="compositionally biased region" description="Basic and acidic residues" evidence="2">
    <location>
        <begin position="739"/>
        <end position="755"/>
    </location>
</feature>
<feature type="compositionally biased region" description="Pro residues" evidence="2">
    <location>
        <begin position="757"/>
        <end position="772"/>
    </location>
</feature>
<feature type="binding site" evidence="1">
    <location>
        <position position="498"/>
    </location>
    <ligand>
        <name>Mg(2+)</name>
        <dbReference type="ChEBI" id="CHEBI:18420"/>
    </ligand>
</feature>
<feature type="binding site" evidence="1">
    <location>
        <position position="504"/>
    </location>
    <ligand>
        <name>Mg(2+)</name>
        <dbReference type="ChEBI" id="CHEBI:18420"/>
    </ligand>
</feature>
<evidence type="ECO:0000255" key="1">
    <source>
        <dbReference type="HAMAP-Rule" id="MF_01595"/>
    </source>
</evidence>
<evidence type="ECO:0000256" key="2">
    <source>
        <dbReference type="SAM" id="MobiDB-lite"/>
    </source>
</evidence>
<dbReference type="EC" id="2.7.7.8" evidence="1"/>
<dbReference type="EMBL" id="CP001275">
    <property type="protein sequence ID" value="ACM05386.1"/>
    <property type="molecule type" value="Genomic_DNA"/>
</dbReference>
<dbReference type="RefSeq" id="WP_012642019.1">
    <property type="nucleotide sequence ID" value="NC_011959.1"/>
</dbReference>
<dbReference type="SMR" id="B9KYR9"/>
<dbReference type="STRING" id="309801.trd_0623"/>
<dbReference type="KEGG" id="tro:trd_0623"/>
<dbReference type="eggNOG" id="COG1185">
    <property type="taxonomic scope" value="Bacteria"/>
</dbReference>
<dbReference type="HOGENOM" id="CLU_004217_2_2_0"/>
<dbReference type="OrthoDB" id="9804305at2"/>
<dbReference type="Proteomes" id="UP000000447">
    <property type="component" value="Chromosome"/>
</dbReference>
<dbReference type="GO" id="GO:0005829">
    <property type="term" value="C:cytosol"/>
    <property type="evidence" value="ECO:0007669"/>
    <property type="project" value="TreeGrafter"/>
</dbReference>
<dbReference type="GO" id="GO:0000175">
    <property type="term" value="F:3'-5'-RNA exonuclease activity"/>
    <property type="evidence" value="ECO:0007669"/>
    <property type="project" value="TreeGrafter"/>
</dbReference>
<dbReference type="GO" id="GO:0000287">
    <property type="term" value="F:magnesium ion binding"/>
    <property type="evidence" value="ECO:0007669"/>
    <property type="project" value="UniProtKB-UniRule"/>
</dbReference>
<dbReference type="GO" id="GO:0004654">
    <property type="term" value="F:polyribonucleotide nucleotidyltransferase activity"/>
    <property type="evidence" value="ECO:0007669"/>
    <property type="project" value="UniProtKB-UniRule"/>
</dbReference>
<dbReference type="GO" id="GO:0003723">
    <property type="term" value="F:RNA binding"/>
    <property type="evidence" value="ECO:0007669"/>
    <property type="project" value="UniProtKB-UniRule"/>
</dbReference>
<dbReference type="GO" id="GO:0006402">
    <property type="term" value="P:mRNA catabolic process"/>
    <property type="evidence" value="ECO:0007669"/>
    <property type="project" value="UniProtKB-UniRule"/>
</dbReference>
<dbReference type="GO" id="GO:0006396">
    <property type="term" value="P:RNA processing"/>
    <property type="evidence" value="ECO:0007669"/>
    <property type="project" value="InterPro"/>
</dbReference>
<dbReference type="CDD" id="cd02393">
    <property type="entry name" value="KH-I_PNPase"/>
    <property type="match status" value="1"/>
</dbReference>
<dbReference type="CDD" id="cd11363">
    <property type="entry name" value="RNase_PH_PNPase_1"/>
    <property type="match status" value="1"/>
</dbReference>
<dbReference type="CDD" id="cd11364">
    <property type="entry name" value="RNase_PH_PNPase_2"/>
    <property type="match status" value="1"/>
</dbReference>
<dbReference type="CDD" id="cd04472">
    <property type="entry name" value="S1_PNPase"/>
    <property type="match status" value="1"/>
</dbReference>
<dbReference type="FunFam" id="3.30.1370.10:FF:000001">
    <property type="entry name" value="Polyribonucleotide nucleotidyltransferase"/>
    <property type="match status" value="1"/>
</dbReference>
<dbReference type="FunFam" id="3.30.230.70:FF:000001">
    <property type="entry name" value="Polyribonucleotide nucleotidyltransferase"/>
    <property type="match status" value="1"/>
</dbReference>
<dbReference type="FunFam" id="3.30.230.70:FF:000002">
    <property type="entry name" value="Polyribonucleotide nucleotidyltransferase"/>
    <property type="match status" value="1"/>
</dbReference>
<dbReference type="FunFam" id="2.40.50.140:FF:000189">
    <property type="entry name" value="Polyribonucleotide nucleotidyltransferase, putative"/>
    <property type="match status" value="1"/>
</dbReference>
<dbReference type="Gene3D" id="3.30.230.70">
    <property type="entry name" value="GHMP Kinase, N-terminal domain"/>
    <property type="match status" value="2"/>
</dbReference>
<dbReference type="Gene3D" id="3.30.1370.10">
    <property type="entry name" value="K Homology domain, type 1"/>
    <property type="match status" value="1"/>
</dbReference>
<dbReference type="Gene3D" id="2.40.50.140">
    <property type="entry name" value="Nucleic acid-binding proteins"/>
    <property type="match status" value="1"/>
</dbReference>
<dbReference type="HAMAP" id="MF_01595">
    <property type="entry name" value="PNPase"/>
    <property type="match status" value="1"/>
</dbReference>
<dbReference type="InterPro" id="IPR001247">
    <property type="entry name" value="ExoRNase_PH_dom1"/>
</dbReference>
<dbReference type="InterPro" id="IPR015847">
    <property type="entry name" value="ExoRNase_PH_dom2"/>
</dbReference>
<dbReference type="InterPro" id="IPR036345">
    <property type="entry name" value="ExoRNase_PH_dom2_sf"/>
</dbReference>
<dbReference type="InterPro" id="IPR004087">
    <property type="entry name" value="KH_dom"/>
</dbReference>
<dbReference type="InterPro" id="IPR004088">
    <property type="entry name" value="KH_dom_type_1"/>
</dbReference>
<dbReference type="InterPro" id="IPR036612">
    <property type="entry name" value="KH_dom_type_1_sf"/>
</dbReference>
<dbReference type="InterPro" id="IPR012340">
    <property type="entry name" value="NA-bd_OB-fold"/>
</dbReference>
<dbReference type="InterPro" id="IPR012162">
    <property type="entry name" value="PNPase"/>
</dbReference>
<dbReference type="InterPro" id="IPR027408">
    <property type="entry name" value="PNPase/RNase_PH_dom_sf"/>
</dbReference>
<dbReference type="InterPro" id="IPR015848">
    <property type="entry name" value="PNPase_PH_RNA-bd_bac/org-type"/>
</dbReference>
<dbReference type="InterPro" id="IPR036456">
    <property type="entry name" value="PNPase_PH_RNA-bd_sf"/>
</dbReference>
<dbReference type="InterPro" id="IPR020568">
    <property type="entry name" value="Ribosomal_Su5_D2-typ_SF"/>
</dbReference>
<dbReference type="InterPro" id="IPR003029">
    <property type="entry name" value="S1_domain"/>
</dbReference>
<dbReference type="NCBIfam" id="TIGR03591">
    <property type="entry name" value="polynuc_phos"/>
    <property type="match status" value="1"/>
</dbReference>
<dbReference type="NCBIfam" id="NF008805">
    <property type="entry name" value="PRK11824.1"/>
    <property type="match status" value="1"/>
</dbReference>
<dbReference type="PANTHER" id="PTHR11252">
    <property type="entry name" value="POLYRIBONUCLEOTIDE NUCLEOTIDYLTRANSFERASE"/>
    <property type="match status" value="1"/>
</dbReference>
<dbReference type="PANTHER" id="PTHR11252:SF0">
    <property type="entry name" value="POLYRIBONUCLEOTIDE NUCLEOTIDYLTRANSFERASE 1, MITOCHONDRIAL"/>
    <property type="match status" value="1"/>
</dbReference>
<dbReference type="Pfam" id="PF00013">
    <property type="entry name" value="KH_1"/>
    <property type="match status" value="1"/>
</dbReference>
<dbReference type="Pfam" id="PF03726">
    <property type="entry name" value="PNPase"/>
    <property type="match status" value="1"/>
</dbReference>
<dbReference type="Pfam" id="PF01138">
    <property type="entry name" value="RNase_PH"/>
    <property type="match status" value="2"/>
</dbReference>
<dbReference type="Pfam" id="PF03725">
    <property type="entry name" value="RNase_PH_C"/>
    <property type="match status" value="2"/>
</dbReference>
<dbReference type="Pfam" id="PF00575">
    <property type="entry name" value="S1"/>
    <property type="match status" value="1"/>
</dbReference>
<dbReference type="PIRSF" id="PIRSF005499">
    <property type="entry name" value="PNPase"/>
    <property type="match status" value="1"/>
</dbReference>
<dbReference type="SMART" id="SM00322">
    <property type="entry name" value="KH"/>
    <property type="match status" value="1"/>
</dbReference>
<dbReference type="SMART" id="SM00316">
    <property type="entry name" value="S1"/>
    <property type="match status" value="1"/>
</dbReference>
<dbReference type="SUPFAM" id="SSF54791">
    <property type="entry name" value="Eukaryotic type KH-domain (KH-domain type I)"/>
    <property type="match status" value="1"/>
</dbReference>
<dbReference type="SUPFAM" id="SSF50249">
    <property type="entry name" value="Nucleic acid-binding proteins"/>
    <property type="match status" value="1"/>
</dbReference>
<dbReference type="SUPFAM" id="SSF46915">
    <property type="entry name" value="Polynucleotide phosphorylase/guanosine pentaphosphate synthase (PNPase/GPSI), domain 3"/>
    <property type="match status" value="1"/>
</dbReference>
<dbReference type="SUPFAM" id="SSF55666">
    <property type="entry name" value="Ribonuclease PH domain 2-like"/>
    <property type="match status" value="2"/>
</dbReference>
<dbReference type="SUPFAM" id="SSF54211">
    <property type="entry name" value="Ribosomal protein S5 domain 2-like"/>
    <property type="match status" value="2"/>
</dbReference>
<dbReference type="PROSITE" id="PS50084">
    <property type="entry name" value="KH_TYPE_1"/>
    <property type="match status" value="1"/>
</dbReference>
<dbReference type="PROSITE" id="PS50126">
    <property type="entry name" value="S1"/>
    <property type="match status" value="1"/>
</dbReference>
<gene>
    <name evidence="1" type="primary">pnp</name>
    <name type="ordered locus">trd_0623</name>
</gene>
<protein>
    <recommendedName>
        <fullName evidence="1">Polyribonucleotide nucleotidyltransferase</fullName>
        <ecNumber evidence="1">2.7.7.8</ecNumber>
    </recommendedName>
    <alternativeName>
        <fullName evidence="1">Polynucleotide phosphorylase</fullName>
        <shortName evidence="1">PNPase</shortName>
    </alternativeName>
</protein>
<organism>
    <name type="scientific">Thermomicrobium roseum (strain ATCC 27502 / DSM 5159 / P-2)</name>
    <dbReference type="NCBI Taxonomy" id="309801"/>
    <lineage>
        <taxon>Bacteria</taxon>
        <taxon>Pseudomonadati</taxon>
        <taxon>Thermomicrobiota</taxon>
        <taxon>Thermomicrobia</taxon>
        <taxon>Thermomicrobiales</taxon>
        <taxon>Thermomicrobiaceae</taxon>
        <taxon>Thermomicrobium</taxon>
    </lineage>
</organism>
<keyword id="KW-0963">Cytoplasm</keyword>
<keyword id="KW-0460">Magnesium</keyword>
<keyword id="KW-0479">Metal-binding</keyword>
<keyword id="KW-0548">Nucleotidyltransferase</keyword>
<keyword id="KW-1185">Reference proteome</keyword>
<keyword id="KW-0694">RNA-binding</keyword>
<keyword id="KW-0808">Transferase</keyword>
<accession>B9KYR9</accession>
<name>PNP_THERP</name>